<reference key="1">
    <citation type="journal article" date="1987" name="Nucleic Acids Res.">
        <title>Nucleotide sequence of Bacillus phage Nf terminal protein gene.</title>
        <authorList>
            <person name="Leavitt M.C."/>
            <person name="Ito J."/>
        </authorList>
    </citation>
    <scope>NUCLEOTIDE SEQUENCE [GENOMIC DNA]</scope>
</reference>
<reference key="2">
    <citation type="journal article" date="1986" name="Gene">
        <title>Nucleotide sequence of gene F of Bacillus phage Nf.</title>
        <authorList>
            <person name="Mizukami Y."/>
            <person name="Sekiya T."/>
            <person name="Hirokawa H."/>
        </authorList>
    </citation>
    <scope>NUCLEOTIDE SEQUENCE [GENOMIC DNA] OF 1-104</scope>
</reference>
<reference key="3">
    <citation type="journal article" date="2008" name="Proc. Natl. Acad. Sci. U.S.A.">
        <title>Phage phi29 and Nf terminal protein-priming domain specifies the internal template nucleotide to initiate DNA replication.</title>
        <authorList>
            <person name="Longas E."/>
            <person name="Villar L."/>
            <person name="Lazaro J.M."/>
            <person name="de Vega M."/>
            <person name="Salas M."/>
        </authorList>
    </citation>
    <scope>FUNCTION</scope>
</reference>
<reference key="4">
    <citation type="journal article" date="2012" name="Proc. Natl. Acad. Sci. U.S.A.">
        <title>Functional eukaryotic nuclear localization signals are widespread in terminal proteins of bacteriophages.</title>
        <authorList>
            <person name="Redrejo-Rodriguez M."/>
            <person name="Munoz-Espin D."/>
            <person name="Holguera I."/>
            <person name="Mencia M."/>
            <person name="Salas M."/>
        </authorList>
    </citation>
    <scope>SUBCELLULAR LOCATION</scope>
    <scope>NUCLEAR LOCALIZATION SIGNAL</scope>
</reference>
<keyword id="KW-0190">Covalent protein-DNA linkage</keyword>
<keyword id="KW-1235">Degradation of host cell envelope components during virus entry</keyword>
<keyword id="KW-1236">Degradation of host peptidoglycans during virus entry</keyword>
<keyword id="KW-0235">DNA replication</keyword>
<keyword id="KW-0244">Early protein</keyword>
<keyword id="KW-1048">Host nucleus</keyword>
<keyword id="KW-0378">Hydrolase</keyword>
<keyword id="KW-0597">Phosphoprotein</keyword>
<keyword id="KW-1194">Viral DNA replication</keyword>
<keyword id="KW-0946">Virion</keyword>
<keyword id="KW-1160">Virus entry into host cell</keyword>
<proteinExistence type="inferred from homology"/>
<feature type="chain" id="PRO_0000106555" description="DNA terminal protein">
    <location>
        <begin position="1"/>
        <end position="266"/>
    </location>
</feature>
<feature type="region of interest" description="Disordered" evidence="1">
    <location>
        <begin position="1"/>
        <end position="73"/>
    </location>
</feature>
<feature type="region of interest" description="Intermediate; makes extensive contacts with the phage DNA polymerase" evidence="1">
    <location>
        <begin position="74"/>
        <end position="172"/>
    </location>
</feature>
<feature type="region of interest" description="Priming" evidence="1">
    <location>
        <begin position="173"/>
        <end position="266"/>
    </location>
</feature>
<feature type="region of interest" description="Interaction with the viral DNA polymerase" evidence="1">
    <location>
        <begin position="256"/>
        <end position="258"/>
    </location>
</feature>
<feature type="short sequence motif" description="Nuclear localization signal" evidence="2">
    <location>
        <begin position="25"/>
        <end position="34"/>
    </location>
</feature>
<feature type="site" description="Positions the 3' end of the template strand at the active site of the DNA polymerase" evidence="1">
    <location>
        <position position="230"/>
    </location>
</feature>
<feature type="modified residue" description="O-(5'-phospho-DNA)-serine" evidence="1">
    <location>
        <position position="232"/>
    </location>
</feature>
<comment type="function">
    <text evidence="1">Acts as a primer for DNA elongation during viral genomic replication. Acts as the small terminase protein during packaging. Recruits the phage DNA polymerase to the bacterial nucleoid. Primer terminal protein (TP) is covalently linked to the 5'-ends of both strands of the genome through a phosphodiester bond between the beta-hydroxyl group of a serine residue and the 5'-phosphate of the terminal deoxyadenylate (dAMP). To start replication, the DNA polymerase forms a heterodimer with a free TP that recognizes the replication origins at both 5' ends of the linear chromosome, and initiates replication using as primer the OH-group of Ser-232 of the TP. Since the polymerase initiates the replication on the second thymine, the TP-dAMP initiation product slides backwards to recover the template information of the first nucleotide.</text>
</comment>
<comment type="function">
    <text evidence="1">Hydrolyzes host peptidoglycans during virus entry.</text>
</comment>
<comment type="subunit">
    <text evidence="1">Interacts with the viral polymerase; this interaction allows the initiation of TP-primed DNA replication at both viral DNA ends. Binds to ssDNA. Interacts with the replication protein p1. Part of a DNA-gp3-gp16 complex.</text>
</comment>
<comment type="subcellular location">
    <subcellularLocation>
        <location evidence="1">Virion</location>
    </subcellularLocation>
    <subcellularLocation>
        <location evidence="2">Host nucleus</location>
    </subcellularLocation>
    <text evidence="1">Associates with the host bacterial nucleoid through its N-terminal region.</text>
</comment>
<comment type="similarity">
    <text evidence="3">Belongs to the phi29likevirus DNA terminal protein family.</text>
</comment>
<dbReference type="EMBL" id="Y00363">
    <property type="protein sequence ID" value="CAA68440.1"/>
    <property type="molecule type" value="Genomic_DNA"/>
</dbReference>
<dbReference type="EMBL" id="M13664">
    <property type="protein sequence ID" value="AAA32196.1"/>
    <property type="molecule type" value="Genomic_DNA"/>
</dbReference>
<dbReference type="PIR" id="A27856">
    <property type="entry name" value="ERBPNP"/>
</dbReference>
<dbReference type="RefSeq" id="YP_009910719.1">
    <property type="nucleotide sequence ID" value="NC_049976.1"/>
</dbReference>
<dbReference type="SMR" id="P06812"/>
<dbReference type="GeneID" id="56239440"/>
<dbReference type="GO" id="GO:0042025">
    <property type="term" value="C:host cell nucleus"/>
    <property type="evidence" value="ECO:0007669"/>
    <property type="project" value="UniProtKB-SubCell"/>
</dbReference>
<dbReference type="GO" id="GO:0044423">
    <property type="term" value="C:virion component"/>
    <property type="evidence" value="ECO:0007669"/>
    <property type="project" value="UniProtKB-KW"/>
</dbReference>
<dbReference type="GO" id="GO:0016787">
    <property type="term" value="F:hydrolase activity"/>
    <property type="evidence" value="ECO:0007669"/>
    <property type="project" value="UniProtKB-KW"/>
</dbReference>
<dbReference type="GO" id="GO:0006269">
    <property type="term" value="P:DNA replication, synthesis of primer"/>
    <property type="evidence" value="ECO:0007669"/>
    <property type="project" value="InterPro"/>
</dbReference>
<dbReference type="GO" id="GO:0098994">
    <property type="term" value="P:symbiont entry into host cell via disruption of host cell envelope"/>
    <property type="evidence" value="ECO:0007669"/>
    <property type="project" value="UniProtKB-KW"/>
</dbReference>
<dbReference type="GO" id="GO:0098932">
    <property type="term" value="P:symbiont entry into host cell via disruption of host cell wall peptidoglycan"/>
    <property type="evidence" value="ECO:0007669"/>
    <property type="project" value="UniProtKB-KW"/>
</dbReference>
<dbReference type="GO" id="GO:0039693">
    <property type="term" value="P:viral DNA genome replication"/>
    <property type="evidence" value="ECO:0007669"/>
    <property type="project" value="UniProtKB-KW"/>
</dbReference>
<dbReference type="Gene3D" id="6.10.250.960">
    <property type="match status" value="1"/>
</dbReference>
<dbReference type="Gene3D" id="1.20.1270.230">
    <property type="entry name" value="DNA terminal protein Gp3, priming domain"/>
    <property type="match status" value="1"/>
</dbReference>
<dbReference type="InterPro" id="IPR008770">
    <property type="entry name" value="DNA_terminal_Gp3"/>
</dbReference>
<dbReference type="InterPro" id="IPR043124">
    <property type="entry name" value="DNA_terminal_Gp3_C"/>
</dbReference>
<dbReference type="InterPro" id="IPR037216">
    <property type="entry name" value="DNA_terminal_Gp3_sf"/>
</dbReference>
<dbReference type="Pfam" id="PF05435">
    <property type="entry name" value="Phi-29_GP3"/>
    <property type="match status" value="1"/>
</dbReference>
<dbReference type="PIRSF" id="PIRSF004179">
    <property type="entry name" value="Phi-29_GP3"/>
    <property type="match status" value="1"/>
</dbReference>
<dbReference type="SUPFAM" id="SSF140919">
    <property type="entry name" value="DNA terminal protein"/>
    <property type="match status" value="1"/>
</dbReference>
<evidence type="ECO:0000250" key="1">
    <source>
        <dbReference type="UniProtKB" id="P03681"/>
    </source>
</evidence>
<evidence type="ECO:0000269" key="2">
    <source>
    </source>
</evidence>
<evidence type="ECO:0000305" key="3"/>
<gene>
    <name type="primary">3</name>
    <name type="synonym">E</name>
</gene>
<accession>P06812</accession>
<name>TERM_BPNF</name>
<protein>
    <recommendedName>
        <fullName>DNA terminal protein</fullName>
    </recommendedName>
    <alternativeName>
        <fullName>Gene product 3</fullName>
        <shortName>gp3</shortName>
    </alternativeName>
    <alternativeName>
        <fullName>Protein p3</fullName>
    </alternativeName>
</protein>
<sequence>MARNSRIRITNNDKALYAKLVKNTKAKISRTKKKYGIDLSNEIELPPLESFQTREEFNKWKQKQESFTNRANQNYQFVKNKYGIVASKAKINEIAKNTKEAQRIVDEQREEIEDKPFISGGKQQGTVGQRMQILSPSQVTGISRPSDFNFDDVRSYARLRTLEEGMAEKASPDYYDRRMTQMHQNFIEIVEKSFNSDWLSDELVERLKKIPPDDFFELYLMFDEISFEYFDSEGEDVEASEAMLNKIHSYLDRYERGDVNLDLKGF</sequence>
<organism>
    <name type="scientific">Bacillus phage Nf</name>
    <name type="common">Bacteriophage Nf</name>
    <dbReference type="NCBI Taxonomy" id="2992639"/>
    <lineage>
        <taxon>Viruses</taxon>
        <taxon>Duplodnaviria</taxon>
        <taxon>Heunggongvirae</taxon>
        <taxon>Uroviricota</taxon>
        <taxon>Caudoviricetes</taxon>
        <taxon>Salasmaviridae</taxon>
        <taxon>Picovirinae</taxon>
        <taxon>Beecentumtrevirus</taxon>
        <taxon>Beecentumtrevirus Nf</taxon>
    </lineage>
</organism>
<organismHost>
    <name type="scientific">Bacillus subtilis</name>
    <dbReference type="NCBI Taxonomy" id="1423"/>
</organismHost>